<keyword id="KW-0025">Alternative splicing</keyword>
<keyword id="KW-1048">Host nucleus</keyword>
<keyword id="KW-0945">Host-virus interaction</keyword>
<keyword id="KW-0813">Transport</keyword>
<keyword id="KW-0946">Virion</keyword>
<evidence type="ECO:0000255" key="1">
    <source>
        <dbReference type="HAMAP-Rule" id="MF_04067"/>
    </source>
</evidence>
<name>NEP_I54A0</name>
<dbReference type="EMBL" id="X52146">
    <property type="protein sequence ID" value="CAB38574.1"/>
    <property type="molecule type" value="Genomic_RNA"/>
</dbReference>
<dbReference type="SMR" id="P17043"/>
<dbReference type="GO" id="GO:0042025">
    <property type="term" value="C:host cell nucleus"/>
    <property type="evidence" value="ECO:0007669"/>
    <property type="project" value="UniProtKB-SubCell"/>
</dbReference>
<dbReference type="GO" id="GO:0044423">
    <property type="term" value="C:virion component"/>
    <property type="evidence" value="ECO:0007669"/>
    <property type="project" value="UniProtKB-UniRule"/>
</dbReference>
<dbReference type="GO" id="GO:0039675">
    <property type="term" value="P:exit of virus from host cell nucleus through nuclear pore"/>
    <property type="evidence" value="ECO:0007669"/>
    <property type="project" value="UniProtKB-UniRule"/>
</dbReference>
<dbReference type="FunFam" id="1.10.287.230:FF:000001">
    <property type="entry name" value="Nuclear export protein"/>
    <property type="match status" value="1"/>
</dbReference>
<dbReference type="Gene3D" id="1.10.287.230">
    <property type="match status" value="1"/>
</dbReference>
<dbReference type="HAMAP" id="MF_04067">
    <property type="entry name" value="INFV_NEP"/>
    <property type="match status" value="1"/>
</dbReference>
<dbReference type="InterPro" id="IPR000968">
    <property type="entry name" value="Flu_NS2"/>
</dbReference>
<dbReference type="Pfam" id="PF00601">
    <property type="entry name" value="Flu_NS2"/>
    <property type="match status" value="1"/>
</dbReference>
<dbReference type="SUPFAM" id="SSF101156">
    <property type="entry name" value="Nonstructural protein ns2, Nep, M1-binding domain"/>
    <property type="match status" value="1"/>
</dbReference>
<comment type="function">
    <text evidence="1">Mediates the nuclear export of encapsidated genomic RNAs (ribonucleoproteins, RNPs). Acts as an adapter between viral RNPs complexes and the nuclear export machinery of the cell. Possesses no intrinsic RNA-binding activity, but includes a C-terminal M1-binding domain. This domain is believed to allow recognition of RNPs bound to the protein M1. Since protein M1 is not available in large quantities before late stages of infection, such an indirect recognition mechanism probably ensures that genomic RNPs are not exported from the host nucleus until sufficient quantities of viral mRNA and progeny genomic RNA have been synthesized. Furthermore, the RNPs enter the host cytoplasm only when associated with the M1 protein that is necessary to guide them to the plasma membrane. May down-regulate viral RNA synthesis when overproduced.</text>
</comment>
<comment type="subunit">
    <text evidence="1">Interacts with protein M1. May interact with host nucleoporin RAB/HRB and exportin XPO1/CRM1.</text>
</comment>
<comment type="subcellular location">
    <subcellularLocation>
        <location evidence="1">Virion</location>
    </subcellularLocation>
    <subcellularLocation>
        <location evidence="1">Host nucleus</location>
    </subcellularLocation>
</comment>
<comment type="alternative products">
    <event type="alternative splicing"/>
    <isoform>
        <id>P17043-1</id>
        <name>NEP</name>
        <name>NS2</name>
        <sequence type="displayed"/>
    </isoform>
    <isoform>
        <id>P17042-1</id>
        <name>NS1</name>
        <sequence type="external"/>
    </isoform>
</comment>
<comment type="miscellaneous">
    <text>Average number present in a viral particle is estimated to be 130-200 molecules.</text>
</comment>
<comment type="similarity">
    <text evidence="1">Belongs to the influenza viruses NEP family.</text>
</comment>
<sequence length="121" mass="14453">MDPNTVSSFQDILLRMSKMQLESSSEDLNGMITQFESLKLYRDSLGEAVMRMGDLHSLQNRNEKWREQLGQKFEEIRWLIEEVRHKLKITENSFEQITFMQALHLLLEVEQEIRTFSFQLI</sequence>
<feature type="chain" id="PRO_0000078995" description="Nuclear export protein">
    <location>
        <begin position="1"/>
        <end position="121"/>
    </location>
</feature>
<feature type="short sequence motif" description="Nuclear export signal" evidence="1">
    <location>
        <begin position="12"/>
        <end position="21"/>
    </location>
</feature>
<feature type="short sequence motif" description="Nuclear export signal" evidence="1">
    <location>
        <begin position="85"/>
        <end position="94"/>
    </location>
</feature>
<reference key="1">
    <citation type="journal article" date="1985" name="Bioorg. Khim.">
        <title>Synthesis, cloning and determination of the primary structure of a full-size DNA copy of fragment 8 from the influenza virus type A genome.</title>
        <authorList>
            <person name="Beklemishev A.B."/>
            <person name="Blinov V.M."/>
            <person name="Vasilenko S.K."/>
            <person name="Golovin S.Y."/>
            <person name="Karginov V.A."/>
            <person name="Mamaev L.V."/>
            <person name="Mikriukov N.N."/>
            <person name="Netesov S.V."/>
            <person name="Petrenko V.A."/>
            <person name="Petrov V.A."/>
            <person name="Frolov I.V."/>
        </authorList>
    </citation>
    <scope>NUCLEOTIDE SEQUENCE [GENOMIC RNA]</scope>
</reference>
<proteinExistence type="inferred from homology"/>
<accession>P17043</accession>
<organismHost>
    <name type="scientific">Aves</name>
    <dbReference type="NCBI Taxonomy" id="8782"/>
</organismHost>
<organismHost>
    <name type="scientific">Homo sapiens</name>
    <name type="common">Human</name>
    <dbReference type="NCBI Taxonomy" id="9606"/>
</organismHost>
<organismHost>
    <name type="scientific">Sus scrofa</name>
    <name type="common">Pig</name>
    <dbReference type="NCBI Taxonomy" id="9823"/>
</organismHost>
<gene>
    <name evidence="1" type="primary">NS</name>
</gene>
<protein>
    <recommendedName>
        <fullName evidence="1">Nuclear export protein</fullName>
        <shortName evidence="1">NEP</shortName>
    </recommendedName>
    <alternativeName>
        <fullName evidence="1">Non-structural protein 2</fullName>
        <shortName evidence="1">NS2</shortName>
    </alternativeName>
</protein>
<organism>
    <name type="scientific">Influenza A virus (strain A/Leningrad/1/1954 H1N1)</name>
    <dbReference type="NCBI Taxonomy" id="393557"/>
    <lineage>
        <taxon>Viruses</taxon>
        <taxon>Riboviria</taxon>
        <taxon>Orthornavirae</taxon>
        <taxon>Negarnaviricota</taxon>
        <taxon>Polyploviricotina</taxon>
        <taxon>Insthoviricetes</taxon>
        <taxon>Articulavirales</taxon>
        <taxon>Orthomyxoviridae</taxon>
        <taxon>Alphainfluenzavirus</taxon>
        <taxon>Alphainfluenzavirus influenzae</taxon>
        <taxon>Influenza A virus</taxon>
    </lineage>
</organism>